<accession>P0DST8</accession>
<accession>P33069</accession>
<gene>
    <name type="primary">OPG117</name>
    <name type="ORF">D5R</name>
    <name type="ORF">F5R</name>
</gene>
<feature type="chain" id="PRO_0000448178" description="Uncoating factor OPG117">
    <location>
        <begin position="1"/>
        <end position="785"/>
    </location>
</feature>
<feature type="domain" description="SF3 helicase" evidence="4">
    <location>
        <begin position="477"/>
        <end position="639"/>
    </location>
</feature>
<feature type="region of interest" description="Primase" evidence="1">
    <location>
        <begin position="342"/>
        <end position="469"/>
    </location>
</feature>
<feature type="active site" evidence="3">
    <location>
        <position position="170"/>
    </location>
</feature>
<feature type="binding site" evidence="4">
    <location>
        <begin position="503"/>
        <end position="510"/>
    </location>
    <ligand>
        <name>ATP</name>
        <dbReference type="ChEBI" id="CHEBI:30616"/>
    </ligand>
</feature>
<proteinExistence type="inferred from homology"/>
<name>PG117_VARV</name>
<dbReference type="EC" id="3.6.4.-" evidence="2"/>
<dbReference type="EMBL" id="L22579">
    <property type="protein sequence ID" value="AAA60843.1"/>
    <property type="molecule type" value="Genomic_DNA"/>
</dbReference>
<dbReference type="PIR" id="B36847">
    <property type="entry name" value="B36847"/>
</dbReference>
<dbReference type="PIR" id="T28533">
    <property type="entry name" value="T28533"/>
</dbReference>
<dbReference type="RefSeq" id="NP_042139.1">
    <property type="nucleotide sequence ID" value="NC_001611.1"/>
</dbReference>
<dbReference type="SMR" id="P0DST8"/>
<dbReference type="GeneID" id="1486421"/>
<dbReference type="KEGG" id="vg:1486421"/>
<dbReference type="Proteomes" id="UP000119805">
    <property type="component" value="Segment"/>
</dbReference>
<dbReference type="GO" id="GO:0030430">
    <property type="term" value="C:host cell cytoplasm"/>
    <property type="evidence" value="ECO:0007669"/>
    <property type="project" value="UniProtKB-SubCell"/>
</dbReference>
<dbReference type="GO" id="GO:0005524">
    <property type="term" value="F:ATP binding"/>
    <property type="evidence" value="ECO:0007669"/>
    <property type="project" value="UniProtKB-KW"/>
</dbReference>
<dbReference type="GO" id="GO:0004386">
    <property type="term" value="F:helicase activity"/>
    <property type="evidence" value="ECO:0007669"/>
    <property type="project" value="UniProtKB-KW"/>
</dbReference>
<dbReference type="GO" id="GO:0016787">
    <property type="term" value="F:hydrolase activity"/>
    <property type="evidence" value="ECO:0007669"/>
    <property type="project" value="UniProtKB-KW"/>
</dbReference>
<dbReference type="InterPro" id="IPR004968">
    <property type="entry name" value="DNA_primase/NTPase_C"/>
</dbReference>
<dbReference type="InterPro" id="IPR014015">
    <property type="entry name" value="Helicase_SF3_DNA-vir"/>
</dbReference>
<dbReference type="InterPro" id="IPR014818">
    <property type="entry name" value="Phage/plasmid_primase_P4_C"/>
</dbReference>
<dbReference type="InterPro" id="IPR051620">
    <property type="entry name" value="Viral_Helicase-Primase_Cplx"/>
</dbReference>
<dbReference type="PANTHER" id="PTHR35372">
    <property type="entry name" value="ATP BINDING PROTEIN-RELATED"/>
    <property type="match status" value="1"/>
</dbReference>
<dbReference type="PANTHER" id="PTHR35372:SF2">
    <property type="entry name" value="SF3 HELICASE DOMAIN-CONTAINING PROTEIN"/>
    <property type="match status" value="1"/>
</dbReference>
<dbReference type="Pfam" id="PF08706">
    <property type="entry name" value="D5_N"/>
    <property type="match status" value="1"/>
</dbReference>
<dbReference type="Pfam" id="PF03288">
    <property type="entry name" value="Pox_D5"/>
    <property type="match status" value="1"/>
</dbReference>
<dbReference type="PROSITE" id="PS51206">
    <property type="entry name" value="SF3_HELICASE_1"/>
    <property type="match status" value="1"/>
</dbReference>
<protein>
    <recommendedName>
        <fullName>Uncoating factor OPG117</fullName>
        <ecNumber evidence="2">3.6.4.-</ecNumber>
    </recommendedName>
</protein>
<organismHost>
    <name type="scientific">Homo sapiens</name>
    <name type="common">Human</name>
    <dbReference type="NCBI Taxonomy" id="9606"/>
</organismHost>
<evidence type="ECO:0000250" key="1"/>
<evidence type="ECO:0000250" key="2">
    <source>
        <dbReference type="UniProtKB" id="P04305"/>
    </source>
</evidence>
<evidence type="ECO:0000255" key="3"/>
<evidence type="ECO:0000255" key="4">
    <source>
        <dbReference type="PROSITE-ProRule" id="PRU00551"/>
    </source>
</evidence>
<evidence type="ECO:0000305" key="5"/>
<reference key="1">
    <citation type="journal article" date="1993" name="Nature">
        <title>Potential virulence determinants in terminal regions of variola smallpox virus genome.</title>
        <authorList>
            <person name="Massung R.F."/>
            <person name="Esposito J.J."/>
            <person name="Liu L.I."/>
            <person name="Qi J."/>
            <person name="Utterback T.R."/>
            <person name="Knight J.C."/>
            <person name="Aubin L."/>
            <person name="Yuran T.E."/>
            <person name="Parsons J.M."/>
            <person name="Loparev V.N."/>
            <person name="Selivanov N.A."/>
            <person name="Cavallaro K.F."/>
            <person name="Kerlavage A.R."/>
            <person name="Mahy B.W.J."/>
            <person name="Venter J.C."/>
        </authorList>
    </citation>
    <scope>NUCLEOTIDE SEQUENCE [GENOMIC DNA]</scope>
    <source>
        <strain>Bangladesh-1975</strain>
    </source>
</reference>
<sequence>MDAVIRGNDVIFVLKTIGVPSVCRQNEDPRFVEAFKCDELERYIKNNPECTLFESLRDEEAYSIVRIFMDVDLDACLDEIDYLTAIQDFIIEVSNCVARFAFTECGAIHENVIKSMRSNFSLTKSTNRDKTSFHIIFLDTYTTMDTLIAMKRTLLELSRSSENPLTRSIDTAVYRKKTTLRVVGTRKNPNCDTIHVMQPPHDNIEDYLFTYVDMNNNSYYFSLQRRLEDLVPDKLWEPGFISFEDAIKRVSKIFINSIINFNDLDENNFTTVPLVIDYVTPCALCKKRSHKHPHQLSLENDAIRIYKTGNPHSCKVKIVPLDGNKLFNIAQRILDTNSVLLTERGDHIVWINNSWKFNSEEPLITKLILSIRHQLPKEYSSELLCPRKRKTVEANIRDMLVDSVETDTYPDKLPFKNGVLDLVDGMFYSGDDAKKYTCTVSTGFKFDDTKFVEDSPEMEELINIINDIQPLTDENKKNRELYEKTLSSCLCGATKGCLTFFFGETATGKSTTKRLLKSAISDLFVETGQTILTDVLDKGPNPFIANMHLKRSVFCSELPDFACSGTKKIRSDNIKKLTEPCVIGRPCFSNKINNRNHATIIIDTNYKPVFDRIDNALMRRIAVVRFRTHFSQPSGREAAENNDAYDKVKLLDEGLDGKIQNNRYRFAFLYLLVKWYRKYHVPIMKLYPTPEEIPDFAFYLKIGTLLVSSSVKHIPLMTDLSKKGYILHDNVVTLPLTTFQQKISKYFNSRLFGHDIESFINRHKKFANVSDEYLQYIFIEDISSP</sequence>
<keyword id="KW-0067">ATP-binding</keyword>
<keyword id="KW-0347">Helicase</keyword>
<keyword id="KW-1035">Host cytoplasm</keyword>
<keyword id="KW-0378">Hydrolase</keyword>
<keyword id="KW-0547">Nucleotide-binding</keyword>
<organism>
    <name type="scientific">Variola virus</name>
    <dbReference type="NCBI Taxonomy" id="10255"/>
    <lineage>
        <taxon>Viruses</taxon>
        <taxon>Varidnaviria</taxon>
        <taxon>Bamfordvirae</taxon>
        <taxon>Nucleocytoviricota</taxon>
        <taxon>Pokkesviricetes</taxon>
        <taxon>Chitovirales</taxon>
        <taxon>Poxviridae</taxon>
        <taxon>Chordopoxvirinae</taxon>
        <taxon>Orthopoxvirus</taxon>
    </lineage>
</organism>
<comment type="function">
    <text evidence="2">Multifunctional protein required for genome uncoating and replication. Major viral uncoating protein that is required for the release of the viral genome from incoming viral cores containing the viral DNA genome. Possesses an ATPase activity that is required for hexamerization and uncoating.</text>
</comment>
<comment type="subunit">
    <text evidence="2">Homomultimer; hexamer. Interacts with OPG148.</text>
</comment>
<comment type="subcellular location">
    <subcellularLocation>
        <location evidence="2">Host cytoplasm</location>
    </subcellularLocation>
    <text evidence="2">Colocalizes with free cytoplasmic cores containing the viral DNA genome.</text>
</comment>
<comment type="similarity">
    <text evidence="5">Belongs to the orthopoxvirus OPG117 family.</text>
</comment>